<keyword id="KW-0031">Aminopeptidase</keyword>
<keyword id="KW-0963">Cytoplasm</keyword>
<keyword id="KW-0378">Hydrolase</keyword>
<keyword id="KW-0464">Manganese</keyword>
<keyword id="KW-0479">Metal-binding</keyword>
<keyword id="KW-0645">Protease</keyword>
<sequence length="503" mass="53037">MDFSIKGCDWSKGEAKGFLTGKSDCIVLGIFEAQTLSGAALDIDTATKGLISRVIKAGDMDGKRGKTLFLHEVSGIGASRVLLVGLGKQDAFNQKAYNDAVTAAWRALLATKVVQVTFTLAQLPVDERSSDWGVRAAILALRNETYRFTQMKSKPEPASHTLKRVVFSVDPSDEKAAKVAVKQAVALANGMDLTRDLGNLPGNVCTPTYLGNTAKKIAKDWGLKAEVLGLKQIQALKMGSFLSVARASVEPPQFIVLHYQGAAAKAAPVVLVGKGITFDTGGISLKPGEGMDEMKYDMCGAGSVLGTMRAVAEMGLKINVVAIVPTCENMPGGNATKPGDIVTSMKGLTIEVLNTDAEGRLILCDALTYAERFKPAAVIDVATLTGACVIALGGHNSGLFSTDDALAGELLDASREANDPAWRMPLDDEYQDQLKSNFADLANIGGRPAGAVTAACFLSRFTESYPWAHLDIAGTAWKGGAAKGATGRPVPLLAQFLIDRAGQ</sequence>
<dbReference type="EC" id="3.4.11.1" evidence="1"/>
<dbReference type="EC" id="3.4.11.10" evidence="1"/>
<dbReference type="EMBL" id="CP000151">
    <property type="protein sequence ID" value="ABB09391.1"/>
    <property type="molecule type" value="Genomic_DNA"/>
</dbReference>
<dbReference type="RefSeq" id="WP_011352915.1">
    <property type="nucleotide sequence ID" value="NC_007510.1"/>
</dbReference>
<dbReference type="SMR" id="Q39DS5"/>
<dbReference type="MEROPS" id="M17.003"/>
<dbReference type="GeneID" id="45095681"/>
<dbReference type="KEGG" id="bur:Bcep18194_A5797"/>
<dbReference type="PATRIC" id="fig|482957.22.peg.2781"/>
<dbReference type="HOGENOM" id="CLU_013734_2_2_4"/>
<dbReference type="Proteomes" id="UP000002705">
    <property type="component" value="Chromosome 1"/>
</dbReference>
<dbReference type="GO" id="GO:0005737">
    <property type="term" value="C:cytoplasm"/>
    <property type="evidence" value="ECO:0007669"/>
    <property type="project" value="UniProtKB-SubCell"/>
</dbReference>
<dbReference type="GO" id="GO:0030145">
    <property type="term" value="F:manganese ion binding"/>
    <property type="evidence" value="ECO:0007669"/>
    <property type="project" value="UniProtKB-UniRule"/>
</dbReference>
<dbReference type="GO" id="GO:0070006">
    <property type="term" value="F:metalloaminopeptidase activity"/>
    <property type="evidence" value="ECO:0007669"/>
    <property type="project" value="InterPro"/>
</dbReference>
<dbReference type="GO" id="GO:0006508">
    <property type="term" value="P:proteolysis"/>
    <property type="evidence" value="ECO:0007669"/>
    <property type="project" value="UniProtKB-KW"/>
</dbReference>
<dbReference type="CDD" id="cd00433">
    <property type="entry name" value="Peptidase_M17"/>
    <property type="match status" value="1"/>
</dbReference>
<dbReference type="FunFam" id="3.40.630.10:FF:000004">
    <property type="entry name" value="Probable cytosol aminopeptidase"/>
    <property type="match status" value="1"/>
</dbReference>
<dbReference type="Gene3D" id="3.40.220.10">
    <property type="entry name" value="Leucine Aminopeptidase, subunit E, domain 1"/>
    <property type="match status" value="1"/>
</dbReference>
<dbReference type="Gene3D" id="3.40.630.10">
    <property type="entry name" value="Zn peptidases"/>
    <property type="match status" value="1"/>
</dbReference>
<dbReference type="HAMAP" id="MF_00181">
    <property type="entry name" value="Cytosol_peptidase_M17"/>
    <property type="match status" value="1"/>
</dbReference>
<dbReference type="InterPro" id="IPR011356">
    <property type="entry name" value="Leucine_aapep/pepB"/>
</dbReference>
<dbReference type="InterPro" id="IPR043472">
    <property type="entry name" value="Macro_dom-like"/>
</dbReference>
<dbReference type="InterPro" id="IPR000819">
    <property type="entry name" value="Peptidase_M17_C"/>
</dbReference>
<dbReference type="InterPro" id="IPR023042">
    <property type="entry name" value="Peptidase_M17_leu_NH2_pept"/>
</dbReference>
<dbReference type="InterPro" id="IPR008283">
    <property type="entry name" value="Peptidase_M17_N"/>
</dbReference>
<dbReference type="NCBIfam" id="NF002073">
    <property type="entry name" value="PRK00913.1-2"/>
    <property type="match status" value="1"/>
</dbReference>
<dbReference type="NCBIfam" id="NF002074">
    <property type="entry name" value="PRK00913.1-4"/>
    <property type="match status" value="1"/>
</dbReference>
<dbReference type="NCBIfam" id="NF002077">
    <property type="entry name" value="PRK00913.2-4"/>
    <property type="match status" value="1"/>
</dbReference>
<dbReference type="NCBIfam" id="NF002083">
    <property type="entry name" value="PRK00913.3-5"/>
    <property type="match status" value="1"/>
</dbReference>
<dbReference type="PANTHER" id="PTHR11963:SF23">
    <property type="entry name" value="CYTOSOL AMINOPEPTIDASE"/>
    <property type="match status" value="1"/>
</dbReference>
<dbReference type="PANTHER" id="PTHR11963">
    <property type="entry name" value="LEUCINE AMINOPEPTIDASE-RELATED"/>
    <property type="match status" value="1"/>
</dbReference>
<dbReference type="Pfam" id="PF00883">
    <property type="entry name" value="Peptidase_M17"/>
    <property type="match status" value="1"/>
</dbReference>
<dbReference type="Pfam" id="PF02789">
    <property type="entry name" value="Peptidase_M17_N"/>
    <property type="match status" value="1"/>
</dbReference>
<dbReference type="PRINTS" id="PR00481">
    <property type="entry name" value="LAMNOPPTDASE"/>
</dbReference>
<dbReference type="SUPFAM" id="SSF52949">
    <property type="entry name" value="Macro domain-like"/>
    <property type="match status" value="1"/>
</dbReference>
<dbReference type="SUPFAM" id="SSF53187">
    <property type="entry name" value="Zn-dependent exopeptidases"/>
    <property type="match status" value="1"/>
</dbReference>
<dbReference type="PROSITE" id="PS00631">
    <property type="entry name" value="CYTOSOL_AP"/>
    <property type="match status" value="1"/>
</dbReference>
<comment type="function">
    <text evidence="1">Presumably involved in the processing and regular turnover of intracellular proteins. Catalyzes the removal of unsubstituted N-terminal amino acids from various peptides.</text>
</comment>
<comment type="catalytic activity">
    <reaction evidence="1">
        <text>Release of an N-terminal amino acid, Xaa-|-Yaa-, in which Xaa is preferably Leu, but may be other amino acids including Pro although not Arg or Lys, and Yaa may be Pro. Amino acid amides and methyl esters are also readily hydrolyzed, but rates on arylamides are exceedingly low.</text>
        <dbReference type="EC" id="3.4.11.1"/>
    </reaction>
</comment>
<comment type="catalytic activity">
    <reaction evidence="1">
        <text>Release of an N-terminal amino acid, preferentially leucine, but not glutamic or aspartic acids.</text>
        <dbReference type="EC" id="3.4.11.10"/>
    </reaction>
</comment>
<comment type="cofactor">
    <cofactor evidence="1">
        <name>Mn(2+)</name>
        <dbReference type="ChEBI" id="CHEBI:29035"/>
    </cofactor>
    <text evidence="1">Binds 2 manganese ions per subunit.</text>
</comment>
<comment type="subcellular location">
    <subcellularLocation>
        <location evidence="1">Cytoplasm</location>
    </subcellularLocation>
</comment>
<comment type="similarity">
    <text evidence="1">Belongs to the peptidase M17 family.</text>
</comment>
<evidence type="ECO:0000255" key="1">
    <source>
        <dbReference type="HAMAP-Rule" id="MF_00181"/>
    </source>
</evidence>
<name>AMPA_BURL3</name>
<proteinExistence type="inferred from homology"/>
<protein>
    <recommendedName>
        <fullName evidence="1">Probable cytosol aminopeptidase</fullName>
        <ecNumber evidence="1">3.4.11.1</ecNumber>
    </recommendedName>
    <alternativeName>
        <fullName evidence="1">Leucine aminopeptidase</fullName>
        <shortName evidence="1">LAP</shortName>
        <ecNumber evidence="1">3.4.11.10</ecNumber>
    </alternativeName>
    <alternativeName>
        <fullName evidence="1">Leucyl aminopeptidase</fullName>
    </alternativeName>
</protein>
<organism>
    <name type="scientific">Burkholderia lata (strain ATCC 17760 / DSM 23089 / LMG 22485 / NCIMB 9086 / R18194 / 383)</name>
    <dbReference type="NCBI Taxonomy" id="482957"/>
    <lineage>
        <taxon>Bacteria</taxon>
        <taxon>Pseudomonadati</taxon>
        <taxon>Pseudomonadota</taxon>
        <taxon>Betaproteobacteria</taxon>
        <taxon>Burkholderiales</taxon>
        <taxon>Burkholderiaceae</taxon>
        <taxon>Burkholderia</taxon>
        <taxon>Burkholderia cepacia complex</taxon>
    </lineage>
</organism>
<accession>Q39DS5</accession>
<feature type="chain" id="PRO_1000019899" description="Probable cytosol aminopeptidase">
    <location>
        <begin position="1"/>
        <end position="503"/>
    </location>
</feature>
<feature type="active site" evidence="1">
    <location>
        <position position="286"/>
    </location>
</feature>
<feature type="active site" evidence="1">
    <location>
        <position position="360"/>
    </location>
</feature>
<feature type="binding site" evidence="1">
    <location>
        <position position="274"/>
    </location>
    <ligand>
        <name>Mn(2+)</name>
        <dbReference type="ChEBI" id="CHEBI:29035"/>
        <label>2</label>
    </ligand>
</feature>
<feature type="binding site" evidence="1">
    <location>
        <position position="279"/>
    </location>
    <ligand>
        <name>Mn(2+)</name>
        <dbReference type="ChEBI" id="CHEBI:29035"/>
        <label>1</label>
    </ligand>
</feature>
<feature type="binding site" evidence="1">
    <location>
        <position position="279"/>
    </location>
    <ligand>
        <name>Mn(2+)</name>
        <dbReference type="ChEBI" id="CHEBI:29035"/>
        <label>2</label>
    </ligand>
</feature>
<feature type="binding site" evidence="1">
    <location>
        <position position="297"/>
    </location>
    <ligand>
        <name>Mn(2+)</name>
        <dbReference type="ChEBI" id="CHEBI:29035"/>
        <label>2</label>
    </ligand>
</feature>
<feature type="binding site" evidence="1">
    <location>
        <position position="356"/>
    </location>
    <ligand>
        <name>Mn(2+)</name>
        <dbReference type="ChEBI" id="CHEBI:29035"/>
        <label>1</label>
    </ligand>
</feature>
<feature type="binding site" evidence="1">
    <location>
        <position position="358"/>
    </location>
    <ligand>
        <name>Mn(2+)</name>
        <dbReference type="ChEBI" id="CHEBI:29035"/>
        <label>1</label>
    </ligand>
</feature>
<feature type="binding site" evidence="1">
    <location>
        <position position="358"/>
    </location>
    <ligand>
        <name>Mn(2+)</name>
        <dbReference type="ChEBI" id="CHEBI:29035"/>
        <label>2</label>
    </ligand>
</feature>
<gene>
    <name evidence="1" type="primary">pepA</name>
    <name type="ordered locus">Bcep18194_A5797</name>
</gene>
<reference key="1">
    <citation type="submission" date="2005-10" db="EMBL/GenBank/DDBJ databases">
        <title>Complete sequence of chromosome 1 of Burkholderia sp. 383.</title>
        <authorList>
            <consortium name="US DOE Joint Genome Institute"/>
            <person name="Copeland A."/>
            <person name="Lucas S."/>
            <person name="Lapidus A."/>
            <person name="Barry K."/>
            <person name="Detter J.C."/>
            <person name="Glavina T."/>
            <person name="Hammon N."/>
            <person name="Israni S."/>
            <person name="Pitluck S."/>
            <person name="Chain P."/>
            <person name="Malfatti S."/>
            <person name="Shin M."/>
            <person name="Vergez L."/>
            <person name="Schmutz J."/>
            <person name="Larimer F."/>
            <person name="Land M."/>
            <person name="Kyrpides N."/>
            <person name="Lykidis A."/>
            <person name="Richardson P."/>
        </authorList>
    </citation>
    <scope>NUCLEOTIDE SEQUENCE [LARGE SCALE GENOMIC DNA]</scope>
    <source>
        <strain>ATCC 17760 / DSM 23089 / LMG 22485 / NCIMB 9086 / R18194 / 383</strain>
    </source>
</reference>